<sequence length="168" mass="18894">MRVQMFSGKETGEFIGGKTSLQTEAYENGLKDEELYYNIKDDLGLISRGNVYLDKTAQTIFSELSIAIDKGNLEPLKNFLKNNKLQHKKADINAKNGYGDTPLCYAAEKNNFEVAKILIKYGADLTIHNAKGETPIELFSQYGNREAVNYLQHCLDILGNNSLYEDTI</sequence>
<dbReference type="EMBL" id="CP000087">
    <property type="protein sequence ID" value="ABE05492.1"/>
    <property type="molecule type" value="Genomic_DNA"/>
</dbReference>
<dbReference type="SMR" id="Q1RGM2"/>
<dbReference type="KEGG" id="rbe:RBE_1411"/>
<dbReference type="eggNOG" id="COG0666">
    <property type="taxonomic scope" value="Bacteria"/>
</dbReference>
<dbReference type="HOGENOM" id="CLU_1617736_0_0_5"/>
<dbReference type="OrthoDB" id="7164495at2"/>
<dbReference type="Proteomes" id="UP000001951">
    <property type="component" value="Chromosome"/>
</dbReference>
<dbReference type="Gene3D" id="1.25.40.20">
    <property type="entry name" value="Ankyrin repeat-containing domain"/>
    <property type="match status" value="1"/>
</dbReference>
<dbReference type="InterPro" id="IPR002110">
    <property type="entry name" value="Ankyrin_rpt"/>
</dbReference>
<dbReference type="InterPro" id="IPR036770">
    <property type="entry name" value="Ankyrin_rpt-contain_sf"/>
</dbReference>
<dbReference type="PANTHER" id="PTHR24198">
    <property type="entry name" value="ANKYRIN REPEAT AND PROTEIN KINASE DOMAIN-CONTAINING PROTEIN"/>
    <property type="match status" value="1"/>
</dbReference>
<dbReference type="PANTHER" id="PTHR24198:SF165">
    <property type="entry name" value="ANKYRIN REPEAT-CONTAINING PROTEIN-RELATED"/>
    <property type="match status" value="1"/>
</dbReference>
<dbReference type="Pfam" id="PF12796">
    <property type="entry name" value="Ank_2"/>
    <property type="match status" value="1"/>
</dbReference>
<dbReference type="SMART" id="SM00248">
    <property type="entry name" value="ANK"/>
    <property type="match status" value="3"/>
</dbReference>
<dbReference type="SUPFAM" id="SSF48403">
    <property type="entry name" value="Ankyrin repeat"/>
    <property type="match status" value="1"/>
</dbReference>
<dbReference type="PROSITE" id="PS50297">
    <property type="entry name" value="ANK_REP_REGION"/>
    <property type="match status" value="1"/>
</dbReference>
<dbReference type="PROSITE" id="PS50088">
    <property type="entry name" value="ANK_REPEAT"/>
    <property type="match status" value="1"/>
</dbReference>
<reference key="1">
    <citation type="journal article" date="2006" name="PLoS Genet.">
        <title>Genome sequence of Rickettsia bellii illuminates the role of amoebae in gene exchanges between intracellular pathogens.</title>
        <authorList>
            <person name="Ogata H."/>
            <person name="La Scola B."/>
            <person name="Audic S."/>
            <person name="Renesto P."/>
            <person name="Blanc G."/>
            <person name="Robert C."/>
            <person name="Fournier P.-E."/>
            <person name="Claverie J.-M."/>
            <person name="Raoult D."/>
        </authorList>
    </citation>
    <scope>NUCLEOTIDE SEQUENCE [LARGE SCALE GENOMIC DNA]</scope>
    <source>
        <strain>RML369-C</strain>
    </source>
</reference>
<gene>
    <name type="ordered locus">RBE_1411</name>
</gene>
<name>Y1411_RICBR</name>
<organism>
    <name type="scientific">Rickettsia bellii (strain RML369-C)</name>
    <dbReference type="NCBI Taxonomy" id="336407"/>
    <lineage>
        <taxon>Bacteria</taxon>
        <taxon>Pseudomonadati</taxon>
        <taxon>Pseudomonadota</taxon>
        <taxon>Alphaproteobacteria</taxon>
        <taxon>Rickettsiales</taxon>
        <taxon>Rickettsiaceae</taxon>
        <taxon>Rickettsieae</taxon>
        <taxon>Rickettsia</taxon>
        <taxon>belli group</taxon>
    </lineage>
</organism>
<feature type="chain" id="PRO_0000280926" description="Putative ankyrin repeat protein RBE_1411">
    <location>
        <begin position="1"/>
        <end position="168"/>
    </location>
</feature>
<feature type="repeat" description="ANK 1">
    <location>
        <begin position="59"/>
        <end position="88"/>
    </location>
</feature>
<feature type="repeat" description="ANK 2">
    <location>
        <begin position="98"/>
        <end position="127"/>
    </location>
</feature>
<feature type="repeat" description="ANK 3">
    <location>
        <begin position="131"/>
        <end position="160"/>
    </location>
</feature>
<accession>Q1RGM2</accession>
<proteinExistence type="predicted"/>
<protein>
    <recommendedName>
        <fullName>Putative ankyrin repeat protein RBE_1411</fullName>
    </recommendedName>
</protein>
<keyword id="KW-0040">ANK repeat</keyword>
<keyword id="KW-0677">Repeat</keyword>